<evidence type="ECO:0000255" key="1">
    <source>
        <dbReference type="PROSITE-ProRule" id="PRU00042"/>
    </source>
</evidence>
<evidence type="ECO:0000255" key="2">
    <source>
        <dbReference type="PROSITE-ProRule" id="PRU00119"/>
    </source>
</evidence>
<evidence type="ECO:0000305" key="3"/>
<feature type="chain" id="PRO_0000234003" description="Zinc finger protein 684">
    <location>
        <begin position="1"/>
        <end position="378"/>
    </location>
</feature>
<feature type="domain" description="KRAB" evidence="2">
    <location>
        <begin position="8"/>
        <end position="79"/>
    </location>
</feature>
<feature type="zinc finger region" description="C2H2-type 1" evidence="1">
    <location>
        <begin position="159"/>
        <end position="181"/>
    </location>
</feature>
<feature type="zinc finger region" description="C2H2-type 2" evidence="1">
    <location>
        <begin position="187"/>
        <end position="209"/>
    </location>
</feature>
<feature type="zinc finger region" description="C2H2-type 3" evidence="1">
    <location>
        <begin position="215"/>
        <end position="237"/>
    </location>
</feature>
<feature type="zinc finger region" description="C2H2-type 4" evidence="1">
    <location>
        <begin position="243"/>
        <end position="265"/>
    </location>
</feature>
<feature type="zinc finger region" description="C2H2-type 5" evidence="1">
    <location>
        <begin position="271"/>
        <end position="293"/>
    </location>
</feature>
<feature type="zinc finger region" description="C2H2-type 6" evidence="1">
    <location>
        <begin position="299"/>
        <end position="321"/>
    </location>
</feature>
<feature type="zinc finger region" description="C2H2-type 7" evidence="1">
    <location>
        <begin position="327"/>
        <end position="349"/>
    </location>
</feature>
<feature type="zinc finger region" description="C2H2-type 8" evidence="1">
    <location>
        <begin position="355"/>
        <end position="377"/>
    </location>
</feature>
<sequence length="378" mass="43945">MISFQESVTFQDVAVDFTAEEWQLLDCAERTLYWDVMLENYRNLISVGCPITKTKVILKVEQGQEPWMVEGANPHESSPESDYPLVDEPGKHRESKDNFLKSVLLTFNKILTMERIHHYNMSTSLNPMRKKSYKSFEKCLPPNLDLLKYNRSYTVENAYECSECGKAFKKKFHFIRHEKNHTRKKPFECNDCGKAYSRKAHLATHQKIHNGERPFVCNDCGKAFMHKAQLVVHQRLHTGEKPYECSQCGKTFTWNSSFNQHVKSHTLEKSFECKECGKTFRYSSSLYKHSRFHTGEKPYQCIICGKAFGNTSVLVTHQRIHTGEKPYSCIECGKAFIKKSHLLRHQITHTGEKPYECNRCGKAFSQKSNLIVHQKIHT</sequence>
<name>ZN684_HUMAN</name>
<keyword id="KW-0238">DNA-binding</keyword>
<keyword id="KW-0479">Metal-binding</keyword>
<keyword id="KW-0539">Nucleus</keyword>
<keyword id="KW-1267">Proteomics identification</keyword>
<keyword id="KW-1185">Reference proteome</keyword>
<keyword id="KW-0677">Repeat</keyword>
<keyword id="KW-0804">Transcription</keyword>
<keyword id="KW-0805">Transcription regulation</keyword>
<keyword id="KW-0862">Zinc</keyword>
<keyword id="KW-0863">Zinc-finger</keyword>
<comment type="function">
    <text>May be involved in transcriptional regulation.</text>
</comment>
<comment type="subcellular location">
    <subcellularLocation>
        <location evidence="3">Nucleus</location>
    </subcellularLocation>
</comment>
<comment type="similarity">
    <text evidence="3">Belongs to the krueppel C2H2-type zinc-finger protein family.</text>
</comment>
<proteinExistence type="evidence at protein level"/>
<organism>
    <name type="scientific">Homo sapiens</name>
    <name type="common">Human</name>
    <dbReference type="NCBI Taxonomy" id="9606"/>
    <lineage>
        <taxon>Eukaryota</taxon>
        <taxon>Metazoa</taxon>
        <taxon>Chordata</taxon>
        <taxon>Craniata</taxon>
        <taxon>Vertebrata</taxon>
        <taxon>Euteleostomi</taxon>
        <taxon>Mammalia</taxon>
        <taxon>Eutheria</taxon>
        <taxon>Euarchontoglires</taxon>
        <taxon>Primates</taxon>
        <taxon>Haplorrhini</taxon>
        <taxon>Catarrhini</taxon>
        <taxon>Hominidae</taxon>
        <taxon>Homo</taxon>
    </lineage>
</organism>
<gene>
    <name type="primary">ZNF684</name>
</gene>
<accession>Q5T5D7</accession>
<accession>Q2NKY4</accession>
<reference key="1">
    <citation type="journal article" date="2006" name="Nature">
        <title>The DNA sequence and biological annotation of human chromosome 1.</title>
        <authorList>
            <person name="Gregory S.G."/>
            <person name="Barlow K.F."/>
            <person name="McLay K.E."/>
            <person name="Kaul R."/>
            <person name="Swarbreck D."/>
            <person name="Dunham A."/>
            <person name="Scott C.E."/>
            <person name="Howe K.L."/>
            <person name="Woodfine K."/>
            <person name="Spencer C.C.A."/>
            <person name="Jones M.C."/>
            <person name="Gillson C."/>
            <person name="Searle S."/>
            <person name="Zhou Y."/>
            <person name="Kokocinski F."/>
            <person name="McDonald L."/>
            <person name="Evans R."/>
            <person name="Phillips K."/>
            <person name="Atkinson A."/>
            <person name="Cooper R."/>
            <person name="Jones C."/>
            <person name="Hall R.E."/>
            <person name="Andrews T.D."/>
            <person name="Lloyd C."/>
            <person name="Ainscough R."/>
            <person name="Almeida J.P."/>
            <person name="Ambrose K.D."/>
            <person name="Anderson F."/>
            <person name="Andrew R.W."/>
            <person name="Ashwell R.I.S."/>
            <person name="Aubin K."/>
            <person name="Babbage A.K."/>
            <person name="Bagguley C.L."/>
            <person name="Bailey J."/>
            <person name="Beasley H."/>
            <person name="Bethel G."/>
            <person name="Bird C.P."/>
            <person name="Bray-Allen S."/>
            <person name="Brown J.Y."/>
            <person name="Brown A.J."/>
            <person name="Buckley D."/>
            <person name="Burton J."/>
            <person name="Bye J."/>
            <person name="Carder C."/>
            <person name="Chapman J.C."/>
            <person name="Clark S.Y."/>
            <person name="Clarke G."/>
            <person name="Clee C."/>
            <person name="Cobley V."/>
            <person name="Collier R.E."/>
            <person name="Corby N."/>
            <person name="Coville G.J."/>
            <person name="Davies J."/>
            <person name="Deadman R."/>
            <person name="Dunn M."/>
            <person name="Earthrowl M."/>
            <person name="Ellington A.G."/>
            <person name="Errington H."/>
            <person name="Frankish A."/>
            <person name="Frankland J."/>
            <person name="French L."/>
            <person name="Garner P."/>
            <person name="Garnett J."/>
            <person name="Gay L."/>
            <person name="Ghori M.R.J."/>
            <person name="Gibson R."/>
            <person name="Gilby L.M."/>
            <person name="Gillett W."/>
            <person name="Glithero R.J."/>
            <person name="Grafham D.V."/>
            <person name="Griffiths C."/>
            <person name="Griffiths-Jones S."/>
            <person name="Grocock R."/>
            <person name="Hammond S."/>
            <person name="Harrison E.S.I."/>
            <person name="Hart E."/>
            <person name="Haugen E."/>
            <person name="Heath P.D."/>
            <person name="Holmes S."/>
            <person name="Holt K."/>
            <person name="Howden P.J."/>
            <person name="Hunt A.R."/>
            <person name="Hunt S.E."/>
            <person name="Hunter G."/>
            <person name="Isherwood J."/>
            <person name="James R."/>
            <person name="Johnson C."/>
            <person name="Johnson D."/>
            <person name="Joy A."/>
            <person name="Kay M."/>
            <person name="Kershaw J.K."/>
            <person name="Kibukawa M."/>
            <person name="Kimberley A.M."/>
            <person name="King A."/>
            <person name="Knights A.J."/>
            <person name="Lad H."/>
            <person name="Laird G."/>
            <person name="Lawlor S."/>
            <person name="Leongamornlert D.A."/>
            <person name="Lloyd D.M."/>
            <person name="Loveland J."/>
            <person name="Lovell J."/>
            <person name="Lush M.J."/>
            <person name="Lyne R."/>
            <person name="Martin S."/>
            <person name="Mashreghi-Mohammadi M."/>
            <person name="Matthews L."/>
            <person name="Matthews N.S.W."/>
            <person name="McLaren S."/>
            <person name="Milne S."/>
            <person name="Mistry S."/>
            <person name="Moore M.J.F."/>
            <person name="Nickerson T."/>
            <person name="O'Dell C.N."/>
            <person name="Oliver K."/>
            <person name="Palmeiri A."/>
            <person name="Palmer S.A."/>
            <person name="Parker A."/>
            <person name="Patel D."/>
            <person name="Pearce A.V."/>
            <person name="Peck A.I."/>
            <person name="Pelan S."/>
            <person name="Phelps K."/>
            <person name="Phillimore B.J."/>
            <person name="Plumb R."/>
            <person name="Rajan J."/>
            <person name="Raymond C."/>
            <person name="Rouse G."/>
            <person name="Saenphimmachak C."/>
            <person name="Sehra H.K."/>
            <person name="Sheridan E."/>
            <person name="Shownkeen R."/>
            <person name="Sims S."/>
            <person name="Skuce C.D."/>
            <person name="Smith M."/>
            <person name="Steward C."/>
            <person name="Subramanian S."/>
            <person name="Sycamore N."/>
            <person name="Tracey A."/>
            <person name="Tromans A."/>
            <person name="Van Helmond Z."/>
            <person name="Wall M."/>
            <person name="Wallis J.M."/>
            <person name="White S."/>
            <person name="Whitehead S.L."/>
            <person name="Wilkinson J.E."/>
            <person name="Willey D.L."/>
            <person name="Williams H."/>
            <person name="Wilming L."/>
            <person name="Wray P.W."/>
            <person name="Wu Z."/>
            <person name="Coulson A."/>
            <person name="Vaudin M."/>
            <person name="Sulston J.E."/>
            <person name="Durbin R.M."/>
            <person name="Hubbard T."/>
            <person name="Wooster R."/>
            <person name="Dunham I."/>
            <person name="Carter N.P."/>
            <person name="McVean G."/>
            <person name="Ross M.T."/>
            <person name="Harrow J."/>
            <person name="Olson M.V."/>
            <person name="Beck S."/>
            <person name="Rogers J."/>
            <person name="Bentley D.R."/>
        </authorList>
    </citation>
    <scope>NUCLEOTIDE SEQUENCE [LARGE SCALE GENOMIC DNA]</scope>
</reference>
<reference key="2">
    <citation type="journal article" date="2004" name="Genome Res.">
        <title>The status, quality, and expansion of the NIH full-length cDNA project: the Mammalian Gene Collection (MGC).</title>
        <authorList>
            <consortium name="The MGC Project Team"/>
        </authorList>
    </citation>
    <scope>NUCLEOTIDE SEQUENCE [LARGE SCALE MRNA]</scope>
    <source>
        <tissue>Pituitary</tissue>
        <tissue>Skin</tissue>
    </source>
</reference>
<dbReference type="EMBL" id="AL356379">
    <property type="status" value="NOT_ANNOTATED_CDS"/>
    <property type="molecule type" value="Genomic_DNA"/>
</dbReference>
<dbReference type="EMBL" id="BC091518">
    <property type="protein sequence ID" value="AAH91518.1"/>
    <property type="molecule type" value="mRNA"/>
</dbReference>
<dbReference type="EMBL" id="BC111463">
    <property type="protein sequence ID" value="AAI11464.1"/>
    <property type="molecule type" value="mRNA"/>
</dbReference>
<dbReference type="CCDS" id="CCDS454.1"/>
<dbReference type="RefSeq" id="NP_689586.3">
    <property type="nucleotide sequence ID" value="NM_152373.3"/>
</dbReference>
<dbReference type="RefSeq" id="XP_011538973.1">
    <property type="nucleotide sequence ID" value="XM_011540671.2"/>
</dbReference>
<dbReference type="RefSeq" id="XP_011538974.1">
    <property type="nucleotide sequence ID" value="XM_011540672.2"/>
</dbReference>
<dbReference type="RefSeq" id="XP_011538975.1">
    <property type="nucleotide sequence ID" value="XM_011540673.2"/>
</dbReference>
<dbReference type="RefSeq" id="XP_016855779.1">
    <property type="nucleotide sequence ID" value="XM_017000290.1"/>
</dbReference>
<dbReference type="SMR" id="Q5T5D7"/>
<dbReference type="BioGRID" id="126056">
    <property type="interactions" value="15"/>
</dbReference>
<dbReference type="FunCoup" id="Q5T5D7">
    <property type="interactions" value="16"/>
</dbReference>
<dbReference type="IntAct" id="Q5T5D7">
    <property type="interactions" value="9"/>
</dbReference>
<dbReference type="STRING" id="9606.ENSP00000497154"/>
<dbReference type="GlyGen" id="Q5T5D7">
    <property type="glycosylation" value="1 site, 1 O-linked glycan (1 site)"/>
</dbReference>
<dbReference type="iPTMnet" id="Q5T5D7"/>
<dbReference type="PhosphoSitePlus" id="Q5T5D7"/>
<dbReference type="BioMuta" id="ZNF684"/>
<dbReference type="DMDM" id="74756332"/>
<dbReference type="jPOST" id="Q5T5D7"/>
<dbReference type="MassIVE" id="Q5T5D7"/>
<dbReference type="PaxDb" id="9606-ENSP00000361784"/>
<dbReference type="PeptideAtlas" id="Q5T5D7"/>
<dbReference type="ProteomicsDB" id="64513"/>
<dbReference type="Antibodypedia" id="32104">
    <property type="antibodies" value="33 antibodies from 12 providers"/>
</dbReference>
<dbReference type="DNASU" id="127396"/>
<dbReference type="Ensembl" id="ENST00000372699.8">
    <property type="protein sequence ID" value="ENSP00000361784.3"/>
    <property type="gene ID" value="ENSG00000117010.17"/>
</dbReference>
<dbReference type="Ensembl" id="ENST00000648542.1">
    <property type="protein sequence ID" value="ENSP00000497154.1"/>
    <property type="gene ID" value="ENSG00000117010.17"/>
</dbReference>
<dbReference type="GeneID" id="127396"/>
<dbReference type="KEGG" id="hsa:127396"/>
<dbReference type="MANE-Select" id="ENST00000372699.8">
    <property type="protein sequence ID" value="ENSP00000361784.3"/>
    <property type="RefSeq nucleotide sequence ID" value="NM_152373.4"/>
    <property type="RefSeq protein sequence ID" value="NP_689586.3"/>
</dbReference>
<dbReference type="UCSC" id="uc001cft.2">
    <property type="organism name" value="human"/>
</dbReference>
<dbReference type="AGR" id="HGNC:28418"/>
<dbReference type="CTD" id="127396"/>
<dbReference type="DisGeNET" id="127396"/>
<dbReference type="GeneCards" id="ZNF684"/>
<dbReference type="HGNC" id="HGNC:28418">
    <property type="gene designation" value="ZNF684"/>
</dbReference>
<dbReference type="HPA" id="ENSG00000117010">
    <property type="expression patterns" value="Low tissue specificity"/>
</dbReference>
<dbReference type="neXtProt" id="NX_Q5T5D7"/>
<dbReference type="OpenTargets" id="ENSG00000117010"/>
<dbReference type="PharmGKB" id="PA142670485"/>
<dbReference type="VEuPathDB" id="HostDB:ENSG00000117010"/>
<dbReference type="eggNOG" id="KOG1721">
    <property type="taxonomic scope" value="Eukaryota"/>
</dbReference>
<dbReference type="GeneTree" id="ENSGT00940000163099"/>
<dbReference type="HOGENOM" id="CLU_002678_0_2_1"/>
<dbReference type="InParanoid" id="Q5T5D7"/>
<dbReference type="OMA" id="DCPLIDE"/>
<dbReference type="OrthoDB" id="6052214at2759"/>
<dbReference type="PAN-GO" id="Q5T5D7">
    <property type="GO annotations" value="3 GO annotations based on evolutionary models"/>
</dbReference>
<dbReference type="PhylomeDB" id="Q5T5D7"/>
<dbReference type="TreeFam" id="TF337898"/>
<dbReference type="PathwayCommons" id="Q5T5D7"/>
<dbReference type="Reactome" id="R-HSA-212436">
    <property type="pathway name" value="Generic Transcription Pathway"/>
</dbReference>
<dbReference type="SignaLink" id="Q5T5D7"/>
<dbReference type="BioGRID-ORCS" id="127396">
    <property type="hits" value="19 hits in 1178 CRISPR screens"/>
</dbReference>
<dbReference type="ChiTaRS" id="ZNF684">
    <property type="organism name" value="human"/>
</dbReference>
<dbReference type="GenomeRNAi" id="127396"/>
<dbReference type="Pharos" id="Q5T5D7">
    <property type="development level" value="Tdark"/>
</dbReference>
<dbReference type="PRO" id="PR:Q5T5D7"/>
<dbReference type="Proteomes" id="UP000005640">
    <property type="component" value="Chromosome 1"/>
</dbReference>
<dbReference type="RNAct" id="Q5T5D7">
    <property type="molecule type" value="protein"/>
</dbReference>
<dbReference type="Bgee" id="ENSG00000117010">
    <property type="expression patterns" value="Expressed in primordial germ cell in gonad and 123 other cell types or tissues"/>
</dbReference>
<dbReference type="ExpressionAtlas" id="Q5T5D7">
    <property type="expression patterns" value="baseline and differential"/>
</dbReference>
<dbReference type="GO" id="GO:0005634">
    <property type="term" value="C:nucleus"/>
    <property type="evidence" value="ECO:0000318"/>
    <property type="project" value="GO_Central"/>
</dbReference>
<dbReference type="GO" id="GO:0000981">
    <property type="term" value="F:DNA-binding transcription factor activity, RNA polymerase II-specific"/>
    <property type="evidence" value="ECO:0000318"/>
    <property type="project" value="GO_Central"/>
</dbReference>
<dbReference type="GO" id="GO:0000977">
    <property type="term" value="F:RNA polymerase II transcription regulatory region sequence-specific DNA binding"/>
    <property type="evidence" value="ECO:0000318"/>
    <property type="project" value="GO_Central"/>
</dbReference>
<dbReference type="GO" id="GO:1990837">
    <property type="term" value="F:sequence-specific double-stranded DNA binding"/>
    <property type="evidence" value="ECO:0000314"/>
    <property type="project" value="ARUK-UCL"/>
</dbReference>
<dbReference type="GO" id="GO:0008270">
    <property type="term" value="F:zinc ion binding"/>
    <property type="evidence" value="ECO:0007669"/>
    <property type="project" value="UniProtKB-KW"/>
</dbReference>
<dbReference type="GO" id="GO:0006357">
    <property type="term" value="P:regulation of transcription by RNA polymerase II"/>
    <property type="evidence" value="ECO:0000318"/>
    <property type="project" value="GO_Central"/>
</dbReference>
<dbReference type="CDD" id="cd07765">
    <property type="entry name" value="KRAB_A-box"/>
    <property type="match status" value="1"/>
</dbReference>
<dbReference type="FunFam" id="3.30.160.60:FF:003729">
    <property type="match status" value="1"/>
</dbReference>
<dbReference type="FunFam" id="3.30.160.60:FF:000638">
    <property type="entry name" value="Zinc finger protein 184"/>
    <property type="match status" value="1"/>
</dbReference>
<dbReference type="FunFam" id="3.30.160.60:FF:000295">
    <property type="entry name" value="zinc finger protein 19"/>
    <property type="match status" value="1"/>
</dbReference>
<dbReference type="FunFam" id="3.30.160.60:FF:000650">
    <property type="entry name" value="Zinc finger protein 197"/>
    <property type="match status" value="1"/>
</dbReference>
<dbReference type="FunFam" id="3.30.160.60:FF:000725">
    <property type="entry name" value="zinc finger protein 205 isoform X1"/>
    <property type="match status" value="1"/>
</dbReference>
<dbReference type="FunFam" id="3.30.160.60:FF:000384">
    <property type="entry name" value="Zinc finger protein 550"/>
    <property type="match status" value="1"/>
</dbReference>
<dbReference type="FunFam" id="3.30.160.60:FF:002008">
    <property type="entry name" value="Zinc finger protein 684"/>
    <property type="match status" value="1"/>
</dbReference>
<dbReference type="FunFam" id="3.30.160.60:FF:001126">
    <property type="entry name" value="zinc finger protein 684 isoform X2"/>
    <property type="match status" value="1"/>
</dbReference>
<dbReference type="Gene3D" id="6.10.140.140">
    <property type="match status" value="1"/>
</dbReference>
<dbReference type="Gene3D" id="3.30.160.60">
    <property type="entry name" value="Classic Zinc Finger"/>
    <property type="match status" value="8"/>
</dbReference>
<dbReference type="InterPro" id="IPR001909">
    <property type="entry name" value="KRAB"/>
</dbReference>
<dbReference type="InterPro" id="IPR036051">
    <property type="entry name" value="KRAB_dom_sf"/>
</dbReference>
<dbReference type="InterPro" id="IPR050758">
    <property type="entry name" value="Znf_C2H2-type"/>
</dbReference>
<dbReference type="InterPro" id="IPR036236">
    <property type="entry name" value="Znf_C2H2_sf"/>
</dbReference>
<dbReference type="InterPro" id="IPR013087">
    <property type="entry name" value="Znf_C2H2_type"/>
</dbReference>
<dbReference type="PANTHER" id="PTHR23234:SF10">
    <property type="entry name" value="RIKEN CDNA 6720489N17 GENE-RELATED"/>
    <property type="match status" value="1"/>
</dbReference>
<dbReference type="PANTHER" id="PTHR23234">
    <property type="entry name" value="ZNF44 PROTEIN"/>
    <property type="match status" value="1"/>
</dbReference>
<dbReference type="Pfam" id="PF01352">
    <property type="entry name" value="KRAB"/>
    <property type="match status" value="1"/>
</dbReference>
<dbReference type="Pfam" id="PF00096">
    <property type="entry name" value="zf-C2H2"/>
    <property type="match status" value="8"/>
</dbReference>
<dbReference type="SMART" id="SM00349">
    <property type="entry name" value="KRAB"/>
    <property type="match status" value="1"/>
</dbReference>
<dbReference type="SMART" id="SM00355">
    <property type="entry name" value="ZnF_C2H2"/>
    <property type="match status" value="8"/>
</dbReference>
<dbReference type="SUPFAM" id="SSF57667">
    <property type="entry name" value="beta-beta-alpha zinc fingers"/>
    <property type="match status" value="4"/>
</dbReference>
<dbReference type="SUPFAM" id="SSF109640">
    <property type="entry name" value="KRAB domain (Kruppel-associated box)"/>
    <property type="match status" value="1"/>
</dbReference>
<dbReference type="PROSITE" id="PS50805">
    <property type="entry name" value="KRAB"/>
    <property type="match status" value="1"/>
</dbReference>
<dbReference type="PROSITE" id="PS00028">
    <property type="entry name" value="ZINC_FINGER_C2H2_1"/>
    <property type="match status" value="8"/>
</dbReference>
<dbReference type="PROSITE" id="PS50157">
    <property type="entry name" value="ZINC_FINGER_C2H2_2"/>
    <property type="match status" value="8"/>
</dbReference>
<protein>
    <recommendedName>
        <fullName>Zinc finger protein 684</fullName>
    </recommendedName>
</protein>